<sequence>MAKLLLYFLLLTSLSDVFGGTDMSKKTFVFPKETDNSYVSLKAQLKKPLSAFTVCLHIYTELFMTRGYSIFSYATEKEANEILIFWSKDRGYILGVGGIEMPFKAPEIPSAPVHICTSWESVSGIIELWVDGKAQVRKSLQKGYFVGTEAMIILGQDQDSFGGSFDANQSFVGDIGDVNMWDFVLSPKEIDMVYSGGTFSPNVLSWRSLTYETHGEVFIKPQLWP</sequence>
<dbReference type="EMBL" id="S60422">
    <property type="protein sequence ID" value="AAC60662.1"/>
    <property type="molecule type" value="Genomic_DNA"/>
</dbReference>
<dbReference type="PIR" id="JX0259">
    <property type="entry name" value="JX0259"/>
</dbReference>
<dbReference type="RefSeq" id="XP_003466601.1">
    <property type="nucleotide sequence ID" value="XM_003466553.2"/>
</dbReference>
<dbReference type="SMR" id="P49254"/>
<dbReference type="FunCoup" id="P49254">
    <property type="interactions" value="20"/>
</dbReference>
<dbReference type="STRING" id="10141.ENSCPOP00000011841"/>
<dbReference type="Ensembl" id="ENSCPOT00000013281.3">
    <property type="protein sequence ID" value="ENSCPOP00000011841.2"/>
    <property type="gene ID" value="ENSCPOG00000013154.4"/>
</dbReference>
<dbReference type="GeneID" id="100727100"/>
<dbReference type="KEGG" id="cpoc:100727100"/>
<dbReference type="CTD" id="1401"/>
<dbReference type="VEuPathDB" id="HostDB:ENSCPOG00000013154"/>
<dbReference type="eggNOG" id="ENOG502S201">
    <property type="taxonomic scope" value="Eukaryota"/>
</dbReference>
<dbReference type="GeneTree" id="ENSGT01100000263515"/>
<dbReference type="HOGENOM" id="CLU_032051_2_0_1"/>
<dbReference type="InParanoid" id="P49254"/>
<dbReference type="OMA" id="MEKLLWC"/>
<dbReference type="OrthoDB" id="547680at2759"/>
<dbReference type="TreeFam" id="TF330208"/>
<dbReference type="Proteomes" id="UP000005447">
    <property type="component" value="Unassembled WGS sequence"/>
</dbReference>
<dbReference type="Bgee" id="ENSCPOG00000013154">
    <property type="expression patterns" value="Expressed in liver"/>
</dbReference>
<dbReference type="GO" id="GO:0005615">
    <property type="term" value="C:extracellular space"/>
    <property type="evidence" value="ECO:0007669"/>
    <property type="project" value="Ensembl"/>
</dbReference>
<dbReference type="GO" id="GO:0005509">
    <property type="term" value="F:calcium ion binding"/>
    <property type="evidence" value="ECO:0007669"/>
    <property type="project" value="Ensembl"/>
</dbReference>
<dbReference type="GO" id="GO:0001849">
    <property type="term" value="F:complement component C1q complex binding"/>
    <property type="evidence" value="ECO:0007669"/>
    <property type="project" value="Ensembl"/>
</dbReference>
<dbReference type="GO" id="GO:0042802">
    <property type="term" value="F:identical protein binding"/>
    <property type="evidence" value="ECO:0007669"/>
    <property type="project" value="Ensembl"/>
</dbReference>
<dbReference type="GO" id="GO:0030169">
    <property type="term" value="F:low-density lipoprotein particle binding"/>
    <property type="evidence" value="ECO:0007669"/>
    <property type="project" value="Ensembl"/>
</dbReference>
<dbReference type="GO" id="GO:0050750">
    <property type="term" value="F:low-density lipoprotein particle receptor binding"/>
    <property type="evidence" value="ECO:0007669"/>
    <property type="project" value="Ensembl"/>
</dbReference>
<dbReference type="GO" id="GO:0006953">
    <property type="term" value="P:acute-phase response"/>
    <property type="evidence" value="ECO:0007669"/>
    <property type="project" value="UniProtKB-KW"/>
</dbReference>
<dbReference type="GO" id="GO:0045087">
    <property type="term" value="P:innate immune response"/>
    <property type="evidence" value="ECO:0007669"/>
    <property type="project" value="TreeGrafter"/>
</dbReference>
<dbReference type="GO" id="GO:0010888">
    <property type="term" value="P:negative regulation of lipid storage"/>
    <property type="evidence" value="ECO:0007669"/>
    <property type="project" value="Ensembl"/>
</dbReference>
<dbReference type="GO" id="GO:0010745">
    <property type="term" value="P:negative regulation of macrophage derived foam cell differentiation"/>
    <property type="evidence" value="ECO:0007669"/>
    <property type="project" value="Ensembl"/>
</dbReference>
<dbReference type="GO" id="GO:0032945">
    <property type="term" value="P:negative regulation of mononuclear cell proliferation"/>
    <property type="evidence" value="ECO:0007669"/>
    <property type="project" value="Ensembl"/>
</dbReference>
<dbReference type="GO" id="GO:0010628">
    <property type="term" value="P:positive regulation of gene expression"/>
    <property type="evidence" value="ECO:0007669"/>
    <property type="project" value="Ensembl"/>
</dbReference>
<dbReference type="GO" id="GO:0032930">
    <property type="term" value="P:positive regulation of superoxide anion generation"/>
    <property type="evidence" value="ECO:0007669"/>
    <property type="project" value="Ensembl"/>
</dbReference>
<dbReference type="GO" id="GO:0032677">
    <property type="term" value="P:regulation of interleukin-8 production"/>
    <property type="evidence" value="ECO:0000250"/>
    <property type="project" value="UniProtKB"/>
</dbReference>
<dbReference type="GO" id="GO:0042310">
    <property type="term" value="P:vasoconstriction"/>
    <property type="evidence" value="ECO:0007669"/>
    <property type="project" value="Ensembl"/>
</dbReference>
<dbReference type="CDD" id="cd00152">
    <property type="entry name" value="PTX"/>
    <property type="match status" value="1"/>
</dbReference>
<dbReference type="FunFam" id="2.60.120.200:FF:000070">
    <property type="entry name" value="Serum amyloid P-component"/>
    <property type="match status" value="1"/>
</dbReference>
<dbReference type="Gene3D" id="2.60.120.200">
    <property type="match status" value="1"/>
</dbReference>
<dbReference type="InterPro" id="IPR013320">
    <property type="entry name" value="ConA-like_dom_sf"/>
</dbReference>
<dbReference type="InterPro" id="IPR030476">
    <property type="entry name" value="Pentaxin_CS"/>
</dbReference>
<dbReference type="InterPro" id="IPR001759">
    <property type="entry name" value="Pentraxin-related"/>
</dbReference>
<dbReference type="InterPro" id="IPR051005">
    <property type="entry name" value="Pentraxin_domain"/>
</dbReference>
<dbReference type="PANTHER" id="PTHR45869:SF7">
    <property type="entry name" value="C-REACTIVE PROTEIN"/>
    <property type="match status" value="1"/>
</dbReference>
<dbReference type="PANTHER" id="PTHR45869">
    <property type="entry name" value="C-REACTIVE PROTEIN-RELATED"/>
    <property type="match status" value="1"/>
</dbReference>
<dbReference type="Pfam" id="PF00354">
    <property type="entry name" value="Pentaxin"/>
    <property type="match status" value="1"/>
</dbReference>
<dbReference type="PRINTS" id="PR00895">
    <property type="entry name" value="PENTAXIN"/>
</dbReference>
<dbReference type="SMART" id="SM00159">
    <property type="entry name" value="PTX"/>
    <property type="match status" value="1"/>
</dbReference>
<dbReference type="SUPFAM" id="SSF49899">
    <property type="entry name" value="Concanavalin A-like lectins/glucanases"/>
    <property type="match status" value="1"/>
</dbReference>
<dbReference type="PROSITE" id="PS00289">
    <property type="entry name" value="PTX_1"/>
    <property type="match status" value="1"/>
</dbReference>
<dbReference type="PROSITE" id="PS51828">
    <property type="entry name" value="PTX_2"/>
    <property type="match status" value="1"/>
</dbReference>
<reference key="1">
    <citation type="journal article" date="1993" name="J. Biochem.">
        <title>Structure, expression, and evolution of guinea pig serum amyloid P component and C-reactive protein.</title>
        <authorList>
            <person name="Rubio N."/>
            <person name="Sharp P.M."/>
            <person name="Rits M."/>
            <person name="Zahedi K."/>
            <person name="Whitehead A.S."/>
        </authorList>
    </citation>
    <scope>NUCLEOTIDE SEQUENCE [GENOMIC DNA]</scope>
    <source>
        <strain>Hartley</strain>
    </source>
</reference>
<proteinExistence type="evidence at transcript level"/>
<name>CRP_CAVPO</name>
<keyword id="KW-0011">Acute phase</keyword>
<keyword id="KW-0106">Calcium</keyword>
<keyword id="KW-1015">Disulfide bond</keyword>
<keyword id="KW-0479">Metal-binding</keyword>
<keyword id="KW-1185">Reference proteome</keyword>
<keyword id="KW-0964">Secreted</keyword>
<keyword id="KW-0732">Signal</keyword>
<feature type="signal peptide" evidence="1">
    <location>
        <begin position="1"/>
        <end position="19"/>
    </location>
</feature>
<feature type="chain" id="PRO_0000023525" description="C-reactive protein">
    <location>
        <begin position="20"/>
        <end position="225"/>
    </location>
</feature>
<feature type="domain" description="Pentraxin (PTX)" evidence="2">
    <location>
        <begin position="24"/>
        <end position="225"/>
    </location>
</feature>
<feature type="binding site" evidence="1">
    <location>
        <position position="80"/>
    </location>
    <ligand>
        <name>Ca(2+)</name>
        <dbReference type="ChEBI" id="CHEBI:29108"/>
        <label>1</label>
    </ligand>
</feature>
<feature type="binding site" evidence="1">
    <location>
        <position position="158"/>
    </location>
    <ligand>
        <name>Ca(2+)</name>
        <dbReference type="ChEBI" id="CHEBI:29108"/>
        <label>1</label>
    </ligand>
</feature>
<feature type="binding site" evidence="1">
    <location>
        <position position="159"/>
    </location>
    <ligand>
        <name>Ca(2+)</name>
        <dbReference type="ChEBI" id="CHEBI:29108"/>
        <label>1</label>
    </ligand>
</feature>
<feature type="binding site" evidence="1">
    <location>
        <position position="159"/>
    </location>
    <ligand>
        <name>Ca(2+)</name>
        <dbReference type="ChEBI" id="CHEBI:29108"/>
        <label>2</label>
    </ligand>
</feature>
<feature type="binding site" evidence="1">
    <location>
        <position position="169"/>
    </location>
    <ligand>
        <name>Ca(2+)</name>
        <dbReference type="ChEBI" id="CHEBI:29108"/>
        <label>2</label>
    </ligand>
</feature>
<feature type="disulfide bond" evidence="2">
    <location>
        <begin position="55"/>
        <end position="116"/>
    </location>
</feature>
<organism>
    <name type="scientific">Cavia porcellus</name>
    <name type="common">Guinea pig</name>
    <dbReference type="NCBI Taxonomy" id="10141"/>
    <lineage>
        <taxon>Eukaryota</taxon>
        <taxon>Metazoa</taxon>
        <taxon>Chordata</taxon>
        <taxon>Craniata</taxon>
        <taxon>Vertebrata</taxon>
        <taxon>Euteleostomi</taxon>
        <taxon>Mammalia</taxon>
        <taxon>Eutheria</taxon>
        <taxon>Euarchontoglires</taxon>
        <taxon>Glires</taxon>
        <taxon>Rodentia</taxon>
        <taxon>Hystricomorpha</taxon>
        <taxon>Caviidae</taxon>
        <taxon>Cavia</taxon>
    </lineage>
</organism>
<gene>
    <name type="primary">CRP</name>
    <name type="synonym">PTX1</name>
</gene>
<comment type="function">
    <text evidence="1">Displays several functions associated with host defense: it promotes agglutination, bacterial capsular swelling, phagocytosis and complement fixation through its calcium-dependent binding to phosphorylcholine. Can interact with DNA and histones and may scavenge nuclear material released from damaged circulating cells (By similarity).</text>
</comment>
<comment type="cofactor">
    <cofactor evidence="1">
        <name>Ca(2+)</name>
        <dbReference type="ChEBI" id="CHEBI:29108"/>
    </cofactor>
    <text evidence="1">Binds 2 calcium ions per subunit.</text>
</comment>
<comment type="subunit">
    <text evidence="1">Homopentamer. Pentraxin (or pentaxin) have a discoid arrangement of 5 non-covalently bound subunits. Interacts with FCN1; may regulate monocyte activation by FCN1 (By similarity).</text>
</comment>
<comment type="subcellular location">
    <subcellularLocation>
        <location>Secreted</location>
    </subcellularLocation>
</comment>
<comment type="tissue specificity">
    <text>Found in plasma.</text>
</comment>
<comment type="similarity">
    <text evidence="3">Belongs to the pentraxin family.</text>
</comment>
<comment type="online information" name="Protein Spotlight">
    <link uri="https://www.proteinspotlight.org/back_issues/030"/>
    <text>No more Christmas pudding? - Issue 30 of January 2003</text>
</comment>
<evidence type="ECO:0000250" key="1"/>
<evidence type="ECO:0000255" key="2">
    <source>
        <dbReference type="PROSITE-ProRule" id="PRU01172"/>
    </source>
</evidence>
<evidence type="ECO:0000305" key="3"/>
<accession>P49254</accession>
<protein>
    <recommendedName>
        <fullName>C-reactive protein</fullName>
    </recommendedName>
</protein>